<dbReference type="EC" id="2.3.1.275" evidence="1"/>
<dbReference type="EMBL" id="CP000686">
    <property type="protein sequence ID" value="ABQ92163.1"/>
    <property type="molecule type" value="Genomic_DNA"/>
</dbReference>
<dbReference type="RefSeq" id="WP_011958504.1">
    <property type="nucleotide sequence ID" value="NC_009523.1"/>
</dbReference>
<dbReference type="SMR" id="A5UZW0"/>
<dbReference type="STRING" id="357808.RoseRS_3809"/>
<dbReference type="KEGG" id="rrs:RoseRS_3809"/>
<dbReference type="eggNOG" id="COG0344">
    <property type="taxonomic scope" value="Bacteria"/>
</dbReference>
<dbReference type="HOGENOM" id="CLU_081254_0_0_0"/>
<dbReference type="OrthoDB" id="9777124at2"/>
<dbReference type="UniPathway" id="UPA00085"/>
<dbReference type="Proteomes" id="UP000006554">
    <property type="component" value="Chromosome"/>
</dbReference>
<dbReference type="GO" id="GO:0005886">
    <property type="term" value="C:plasma membrane"/>
    <property type="evidence" value="ECO:0007669"/>
    <property type="project" value="UniProtKB-SubCell"/>
</dbReference>
<dbReference type="GO" id="GO:0043772">
    <property type="term" value="F:acyl-phosphate glycerol-3-phosphate acyltransferase activity"/>
    <property type="evidence" value="ECO:0007669"/>
    <property type="project" value="UniProtKB-UniRule"/>
</dbReference>
<dbReference type="GO" id="GO:0008654">
    <property type="term" value="P:phospholipid biosynthetic process"/>
    <property type="evidence" value="ECO:0007669"/>
    <property type="project" value="UniProtKB-UniRule"/>
</dbReference>
<dbReference type="HAMAP" id="MF_01043">
    <property type="entry name" value="PlsY"/>
    <property type="match status" value="1"/>
</dbReference>
<dbReference type="InterPro" id="IPR003811">
    <property type="entry name" value="G3P_acylTferase_PlsY"/>
</dbReference>
<dbReference type="NCBIfam" id="TIGR00023">
    <property type="entry name" value="glycerol-3-phosphate 1-O-acyltransferase PlsY"/>
    <property type="match status" value="1"/>
</dbReference>
<dbReference type="PANTHER" id="PTHR30309:SF0">
    <property type="entry name" value="GLYCEROL-3-PHOSPHATE ACYLTRANSFERASE-RELATED"/>
    <property type="match status" value="1"/>
</dbReference>
<dbReference type="PANTHER" id="PTHR30309">
    <property type="entry name" value="INNER MEMBRANE PROTEIN YGIH"/>
    <property type="match status" value="1"/>
</dbReference>
<dbReference type="Pfam" id="PF02660">
    <property type="entry name" value="G3P_acyltransf"/>
    <property type="match status" value="1"/>
</dbReference>
<dbReference type="SMART" id="SM01207">
    <property type="entry name" value="G3P_acyltransf"/>
    <property type="match status" value="1"/>
</dbReference>
<evidence type="ECO:0000255" key="1">
    <source>
        <dbReference type="HAMAP-Rule" id="MF_01043"/>
    </source>
</evidence>
<accession>A5UZW0</accession>
<proteinExistence type="inferred from homology"/>
<name>PLSY_ROSS1</name>
<organism>
    <name type="scientific">Roseiflexus sp. (strain RS-1)</name>
    <dbReference type="NCBI Taxonomy" id="357808"/>
    <lineage>
        <taxon>Bacteria</taxon>
        <taxon>Bacillati</taxon>
        <taxon>Chloroflexota</taxon>
        <taxon>Chloroflexia</taxon>
        <taxon>Chloroflexales</taxon>
        <taxon>Roseiflexineae</taxon>
        <taxon>Roseiflexaceae</taxon>
        <taxon>Roseiflexus</taxon>
    </lineage>
</organism>
<comment type="function">
    <text evidence="1">Catalyzes the transfer of an acyl group from acyl-phosphate (acyl-PO(4)) to glycerol-3-phosphate (G3P) to form lysophosphatidic acid (LPA). This enzyme utilizes acyl-phosphate as fatty acyl donor, but not acyl-CoA or acyl-ACP.</text>
</comment>
<comment type="catalytic activity">
    <reaction evidence="1">
        <text>an acyl phosphate + sn-glycerol 3-phosphate = a 1-acyl-sn-glycero-3-phosphate + phosphate</text>
        <dbReference type="Rhea" id="RHEA:34075"/>
        <dbReference type="ChEBI" id="CHEBI:43474"/>
        <dbReference type="ChEBI" id="CHEBI:57597"/>
        <dbReference type="ChEBI" id="CHEBI:57970"/>
        <dbReference type="ChEBI" id="CHEBI:59918"/>
        <dbReference type="EC" id="2.3.1.275"/>
    </reaction>
</comment>
<comment type="pathway">
    <text evidence="1">Lipid metabolism; phospholipid metabolism.</text>
</comment>
<comment type="subunit">
    <text evidence="1">Probably interacts with PlsX.</text>
</comment>
<comment type="subcellular location">
    <subcellularLocation>
        <location evidence="1">Cell membrane</location>
        <topology evidence="1">Multi-pass membrane protein</topology>
    </subcellularLocation>
</comment>
<comment type="similarity">
    <text evidence="1">Belongs to the PlsY family.</text>
</comment>
<keyword id="KW-1003">Cell membrane</keyword>
<keyword id="KW-0444">Lipid biosynthesis</keyword>
<keyword id="KW-0443">Lipid metabolism</keyword>
<keyword id="KW-0472">Membrane</keyword>
<keyword id="KW-0594">Phospholipid biosynthesis</keyword>
<keyword id="KW-1208">Phospholipid metabolism</keyword>
<keyword id="KW-0808">Transferase</keyword>
<keyword id="KW-0812">Transmembrane</keyword>
<keyword id="KW-1133">Transmembrane helix</keyword>
<protein>
    <recommendedName>
        <fullName evidence="1">Glycerol-3-phosphate acyltransferase</fullName>
    </recommendedName>
    <alternativeName>
        <fullName evidence="1">Acyl-PO4 G3P acyltransferase</fullName>
    </alternativeName>
    <alternativeName>
        <fullName evidence="1">Acyl-phosphate--glycerol-3-phosphate acyltransferase</fullName>
    </alternativeName>
    <alternativeName>
        <fullName evidence="1">G3P acyltransferase</fullName>
        <shortName evidence="1">GPAT</shortName>
        <ecNumber evidence="1">2.3.1.275</ecNumber>
    </alternativeName>
    <alternativeName>
        <fullName evidence="1">Lysophosphatidic acid synthase</fullName>
        <shortName evidence="1">LPA synthase</shortName>
    </alternativeName>
</protein>
<gene>
    <name evidence="1" type="primary">plsY</name>
    <name type="ordered locus">RoseRS_3809</name>
</gene>
<feature type="chain" id="PRO_1000084391" description="Glycerol-3-phosphate acyltransferase">
    <location>
        <begin position="1"/>
        <end position="203"/>
    </location>
</feature>
<feature type="transmembrane region" description="Helical" evidence="1">
    <location>
        <begin position="5"/>
        <end position="25"/>
    </location>
</feature>
<feature type="transmembrane region" description="Helical" evidence="1">
    <location>
        <begin position="50"/>
        <end position="70"/>
    </location>
</feature>
<feature type="transmembrane region" description="Helical" evidence="1">
    <location>
        <begin position="72"/>
        <end position="92"/>
    </location>
</feature>
<feature type="transmembrane region" description="Helical" evidence="1">
    <location>
        <begin position="115"/>
        <end position="135"/>
    </location>
</feature>
<feature type="transmembrane region" description="Helical" evidence="1">
    <location>
        <begin position="140"/>
        <end position="160"/>
    </location>
</feature>
<feature type="transmembrane region" description="Helical" evidence="1">
    <location>
        <begin position="162"/>
        <end position="182"/>
    </location>
</feature>
<sequence>MMPTIASIALVLLAYLSGSIPFSLLVARAWGVDLRVSGSGNVGAANVWRTCGFSAFALAMGGDMLKGALPTIAAQALGLSPLAVVIVGTAAMLGHTRSIFLGFRGGKAVATGGGVVLTLAPLVALPGLAAWAVTFGITRISAVASLTAAAVCGIAAAVLLALGMLPPAYAIFVWGAVAAIVFLHRSNIHRLRTGTENRFEKLF</sequence>
<reference key="1">
    <citation type="submission" date="2007-04" db="EMBL/GenBank/DDBJ databases">
        <title>Complete sequence of Roseiflexus sp. RS-1.</title>
        <authorList>
            <consortium name="US DOE Joint Genome Institute"/>
            <person name="Copeland A."/>
            <person name="Lucas S."/>
            <person name="Lapidus A."/>
            <person name="Barry K."/>
            <person name="Detter J.C."/>
            <person name="Glavina del Rio T."/>
            <person name="Hammon N."/>
            <person name="Israni S."/>
            <person name="Dalin E."/>
            <person name="Tice H."/>
            <person name="Pitluck S."/>
            <person name="Chertkov O."/>
            <person name="Brettin T."/>
            <person name="Bruce D."/>
            <person name="Han C."/>
            <person name="Schmutz J."/>
            <person name="Larimer F."/>
            <person name="Land M."/>
            <person name="Hauser L."/>
            <person name="Kyrpides N."/>
            <person name="Mikhailova N."/>
            <person name="Bryant D.A."/>
            <person name="Richardson P."/>
        </authorList>
    </citation>
    <scope>NUCLEOTIDE SEQUENCE [LARGE SCALE GENOMIC DNA]</scope>
    <source>
        <strain>RS-1</strain>
    </source>
</reference>